<gene>
    <name evidence="1" type="primary">def</name>
    <name type="ordered locus">APP7_1771</name>
</gene>
<evidence type="ECO:0000255" key="1">
    <source>
        <dbReference type="HAMAP-Rule" id="MF_00163"/>
    </source>
</evidence>
<organism>
    <name type="scientific">Actinobacillus pleuropneumoniae serotype 7 (strain AP76)</name>
    <dbReference type="NCBI Taxonomy" id="537457"/>
    <lineage>
        <taxon>Bacteria</taxon>
        <taxon>Pseudomonadati</taxon>
        <taxon>Pseudomonadota</taxon>
        <taxon>Gammaproteobacteria</taxon>
        <taxon>Pasteurellales</taxon>
        <taxon>Pasteurellaceae</taxon>
        <taxon>Actinobacillus</taxon>
    </lineage>
</organism>
<proteinExistence type="inferred from homology"/>
<comment type="function">
    <text evidence="1">Removes the formyl group from the N-terminal Met of newly synthesized proteins. Requires at least a dipeptide for an efficient rate of reaction. N-terminal L-methionine is a prerequisite for activity but the enzyme has broad specificity at other positions.</text>
</comment>
<comment type="catalytic activity">
    <reaction evidence="1">
        <text>N-terminal N-formyl-L-methionyl-[peptide] + H2O = N-terminal L-methionyl-[peptide] + formate</text>
        <dbReference type="Rhea" id="RHEA:24420"/>
        <dbReference type="Rhea" id="RHEA-COMP:10639"/>
        <dbReference type="Rhea" id="RHEA-COMP:10640"/>
        <dbReference type="ChEBI" id="CHEBI:15377"/>
        <dbReference type="ChEBI" id="CHEBI:15740"/>
        <dbReference type="ChEBI" id="CHEBI:49298"/>
        <dbReference type="ChEBI" id="CHEBI:64731"/>
        <dbReference type="EC" id="3.5.1.88"/>
    </reaction>
</comment>
<comment type="cofactor">
    <cofactor evidence="1">
        <name>Fe(2+)</name>
        <dbReference type="ChEBI" id="CHEBI:29033"/>
    </cofactor>
    <text evidence="1">Binds 1 Fe(2+) ion.</text>
</comment>
<comment type="similarity">
    <text evidence="1">Belongs to the polypeptide deformylase family.</text>
</comment>
<protein>
    <recommendedName>
        <fullName evidence="1">Peptide deformylase</fullName>
        <shortName evidence="1">PDF</shortName>
        <ecNumber evidence="1">3.5.1.88</ecNumber>
    </recommendedName>
    <alternativeName>
        <fullName evidence="1">Polypeptide deformylase</fullName>
    </alternativeName>
</protein>
<name>DEF_ACTP7</name>
<keyword id="KW-0378">Hydrolase</keyword>
<keyword id="KW-0408">Iron</keyword>
<keyword id="KW-0479">Metal-binding</keyword>
<keyword id="KW-0648">Protein biosynthesis</keyword>
<reference key="1">
    <citation type="submission" date="2008-06" db="EMBL/GenBank/DDBJ databases">
        <title>Genome and proteome analysis of A. pleuropneumoniae serotype 7.</title>
        <authorList>
            <person name="Linke B."/>
            <person name="Buettner F."/>
            <person name="Martinez-Arias R."/>
            <person name="Goesmann A."/>
            <person name="Baltes N."/>
            <person name="Tegetmeyer H."/>
            <person name="Singh M."/>
            <person name="Gerlach G.F."/>
        </authorList>
    </citation>
    <scope>NUCLEOTIDE SEQUENCE [LARGE SCALE GENOMIC DNA]</scope>
    <source>
        <strain>AP76</strain>
    </source>
</reference>
<accession>B3GYT7</accession>
<sequence length="170" mass="19087">MSVLEVVLYPDEGLAKVCEPVAQVDDELNQFIDDMFDTMYEHEGIGLAAPQVGVLKRVITIDIEGDKTNQVVLINPEILESCGETGIEEGCLSIPGHRALVPRKEKVKVKALNRKGEEVIYEADGLFAICIQHEIDHLNGVLFVDHISALKRQRIKEKMQKLKKQIERAK</sequence>
<feature type="chain" id="PRO_1000097292" description="Peptide deformylase">
    <location>
        <begin position="1"/>
        <end position="170"/>
    </location>
</feature>
<feature type="active site" evidence="1">
    <location>
        <position position="134"/>
    </location>
</feature>
<feature type="binding site" evidence="1">
    <location>
        <position position="91"/>
    </location>
    <ligand>
        <name>Fe cation</name>
        <dbReference type="ChEBI" id="CHEBI:24875"/>
    </ligand>
</feature>
<feature type="binding site" evidence="1">
    <location>
        <position position="133"/>
    </location>
    <ligand>
        <name>Fe cation</name>
        <dbReference type="ChEBI" id="CHEBI:24875"/>
    </ligand>
</feature>
<feature type="binding site" evidence="1">
    <location>
        <position position="137"/>
    </location>
    <ligand>
        <name>Fe cation</name>
        <dbReference type="ChEBI" id="CHEBI:24875"/>
    </ligand>
</feature>
<dbReference type="EC" id="3.5.1.88" evidence="1"/>
<dbReference type="EMBL" id="CP001091">
    <property type="protein sequence ID" value="ACE62423.1"/>
    <property type="molecule type" value="Genomic_DNA"/>
</dbReference>
<dbReference type="RefSeq" id="WP_005599196.1">
    <property type="nucleotide sequence ID" value="NC_010939.1"/>
</dbReference>
<dbReference type="SMR" id="B3GYT7"/>
<dbReference type="GeneID" id="48599999"/>
<dbReference type="KEGG" id="apa:APP7_1771"/>
<dbReference type="HOGENOM" id="CLU_061901_2_1_6"/>
<dbReference type="Proteomes" id="UP000001226">
    <property type="component" value="Chromosome"/>
</dbReference>
<dbReference type="GO" id="GO:0046872">
    <property type="term" value="F:metal ion binding"/>
    <property type="evidence" value="ECO:0007669"/>
    <property type="project" value="UniProtKB-KW"/>
</dbReference>
<dbReference type="GO" id="GO:0042586">
    <property type="term" value="F:peptide deformylase activity"/>
    <property type="evidence" value="ECO:0007669"/>
    <property type="project" value="UniProtKB-UniRule"/>
</dbReference>
<dbReference type="GO" id="GO:0043686">
    <property type="term" value="P:co-translational protein modification"/>
    <property type="evidence" value="ECO:0007669"/>
    <property type="project" value="TreeGrafter"/>
</dbReference>
<dbReference type="GO" id="GO:0006412">
    <property type="term" value="P:translation"/>
    <property type="evidence" value="ECO:0007669"/>
    <property type="project" value="UniProtKB-UniRule"/>
</dbReference>
<dbReference type="CDD" id="cd00487">
    <property type="entry name" value="Pep_deformylase"/>
    <property type="match status" value="1"/>
</dbReference>
<dbReference type="FunFam" id="3.90.45.10:FF:000001">
    <property type="entry name" value="Peptide deformylase"/>
    <property type="match status" value="1"/>
</dbReference>
<dbReference type="Gene3D" id="3.90.45.10">
    <property type="entry name" value="Peptide deformylase"/>
    <property type="match status" value="1"/>
</dbReference>
<dbReference type="HAMAP" id="MF_00163">
    <property type="entry name" value="Pep_deformylase"/>
    <property type="match status" value="1"/>
</dbReference>
<dbReference type="InterPro" id="IPR023635">
    <property type="entry name" value="Peptide_deformylase"/>
</dbReference>
<dbReference type="InterPro" id="IPR036821">
    <property type="entry name" value="Peptide_deformylase_sf"/>
</dbReference>
<dbReference type="NCBIfam" id="TIGR00079">
    <property type="entry name" value="pept_deformyl"/>
    <property type="match status" value="1"/>
</dbReference>
<dbReference type="NCBIfam" id="NF001159">
    <property type="entry name" value="PRK00150.1-3"/>
    <property type="match status" value="1"/>
</dbReference>
<dbReference type="PANTHER" id="PTHR10458">
    <property type="entry name" value="PEPTIDE DEFORMYLASE"/>
    <property type="match status" value="1"/>
</dbReference>
<dbReference type="PANTHER" id="PTHR10458:SF21">
    <property type="entry name" value="PEPTIDE DEFORMYLASE"/>
    <property type="match status" value="1"/>
</dbReference>
<dbReference type="Pfam" id="PF01327">
    <property type="entry name" value="Pep_deformylase"/>
    <property type="match status" value="1"/>
</dbReference>
<dbReference type="PIRSF" id="PIRSF004749">
    <property type="entry name" value="Pep_def"/>
    <property type="match status" value="1"/>
</dbReference>
<dbReference type="PRINTS" id="PR01576">
    <property type="entry name" value="PDEFORMYLASE"/>
</dbReference>
<dbReference type="SUPFAM" id="SSF56420">
    <property type="entry name" value="Peptide deformylase"/>
    <property type="match status" value="1"/>
</dbReference>